<name>MURI_RHIME</name>
<reference key="1">
    <citation type="journal article" date="2001" name="Proc. Natl. Acad. Sci. U.S.A.">
        <title>Analysis of the chromosome sequence of the legume symbiont Sinorhizobium meliloti strain 1021.</title>
        <authorList>
            <person name="Capela D."/>
            <person name="Barloy-Hubler F."/>
            <person name="Gouzy J."/>
            <person name="Bothe G."/>
            <person name="Ampe F."/>
            <person name="Batut J."/>
            <person name="Boistard P."/>
            <person name="Becker A."/>
            <person name="Boutry M."/>
            <person name="Cadieu E."/>
            <person name="Dreano S."/>
            <person name="Gloux S."/>
            <person name="Godrie T."/>
            <person name="Goffeau A."/>
            <person name="Kahn D."/>
            <person name="Kiss E."/>
            <person name="Lelaure V."/>
            <person name="Masuy D."/>
            <person name="Pohl T."/>
            <person name="Portetelle D."/>
            <person name="Puehler A."/>
            <person name="Purnelle B."/>
            <person name="Ramsperger U."/>
            <person name="Renard C."/>
            <person name="Thebault P."/>
            <person name="Vandenbol M."/>
            <person name="Weidner S."/>
            <person name="Galibert F."/>
        </authorList>
    </citation>
    <scope>NUCLEOTIDE SEQUENCE [LARGE SCALE GENOMIC DNA]</scope>
    <source>
        <strain>1021</strain>
    </source>
</reference>
<reference key="2">
    <citation type="journal article" date="2001" name="Science">
        <title>The composite genome of the legume symbiont Sinorhizobium meliloti.</title>
        <authorList>
            <person name="Galibert F."/>
            <person name="Finan T.M."/>
            <person name="Long S.R."/>
            <person name="Puehler A."/>
            <person name="Abola P."/>
            <person name="Ampe F."/>
            <person name="Barloy-Hubler F."/>
            <person name="Barnett M.J."/>
            <person name="Becker A."/>
            <person name="Boistard P."/>
            <person name="Bothe G."/>
            <person name="Boutry M."/>
            <person name="Bowser L."/>
            <person name="Buhrmester J."/>
            <person name="Cadieu E."/>
            <person name="Capela D."/>
            <person name="Chain P."/>
            <person name="Cowie A."/>
            <person name="Davis R.W."/>
            <person name="Dreano S."/>
            <person name="Federspiel N.A."/>
            <person name="Fisher R.F."/>
            <person name="Gloux S."/>
            <person name="Godrie T."/>
            <person name="Goffeau A."/>
            <person name="Golding B."/>
            <person name="Gouzy J."/>
            <person name="Gurjal M."/>
            <person name="Hernandez-Lucas I."/>
            <person name="Hong A."/>
            <person name="Huizar L."/>
            <person name="Hyman R.W."/>
            <person name="Jones T."/>
            <person name="Kahn D."/>
            <person name="Kahn M.L."/>
            <person name="Kalman S."/>
            <person name="Keating D.H."/>
            <person name="Kiss E."/>
            <person name="Komp C."/>
            <person name="Lelaure V."/>
            <person name="Masuy D."/>
            <person name="Palm C."/>
            <person name="Peck M.C."/>
            <person name="Pohl T.M."/>
            <person name="Portetelle D."/>
            <person name="Purnelle B."/>
            <person name="Ramsperger U."/>
            <person name="Surzycki R."/>
            <person name="Thebault P."/>
            <person name="Vandenbol M."/>
            <person name="Vorhoelter F.J."/>
            <person name="Weidner S."/>
            <person name="Wells D.H."/>
            <person name="Wong K."/>
            <person name="Yeh K.-C."/>
            <person name="Batut J."/>
        </authorList>
    </citation>
    <scope>NUCLEOTIDE SEQUENCE [LARGE SCALE GENOMIC DNA]</scope>
    <source>
        <strain>1021</strain>
    </source>
</reference>
<feature type="chain" id="PRO_0000095502" description="Glutamate racemase">
    <location>
        <begin position="1"/>
        <end position="277"/>
    </location>
</feature>
<feature type="active site" description="Proton donor/acceptor" evidence="1">
    <location>
        <position position="77"/>
    </location>
</feature>
<feature type="active site" description="Proton donor/acceptor" evidence="1">
    <location>
        <position position="192"/>
    </location>
</feature>
<feature type="binding site" evidence="1">
    <location>
        <begin position="13"/>
        <end position="14"/>
    </location>
    <ligand>
        <name>substrate</name>
    </ligand>
</feature>
<feature type="binding site" evidence="1">
    <location>
        <begin position="45"/>
        <end position="46"/>
    </location>
    <ligand>
        <name>substrate</name>
    </ligand>
</feature>
<feature type="binding site" evidence="1">
    <location>
        <begin position="78"/>
        <end position="79"/>
    </location>
    <ligand>
        <name>substrate</name>
    </ligand>
</feature>
<feature type="binding site" evidence="1">
    <location>
        <begin position="193"/>
        <end position="194"/>
    </location>
    <ligand>
        <name>substrate</name>
    </ligand>
</feature>
<comment type="function">
    <text evidence="1">Provides the (R)-glutamate required for cell wall biosynthesis.</text>
</comment>
<comment type="catalytic activity">
    <reaction evidence="1">
        <text>L-glutamate = D-glutamate</text>
        <dbReference type="Rhea" id="RHEA:12813"/>
        <dbReference type="ChEBI" id="CHEBI:29985"/>
        <dbReference type="ChEBI" id="CHEBI:29986"/>
        <dbReference type="EC" id="5.1.1.3"/>
    </reaction>
</comment>
<comment type="pathway">
    <text evidence="1">Cell wall biogenesis; peptidoglycan biosynthesis.</text>
</comment>
<comment type="similarity">
    <text evidence="1">Belongs to the aspartate/glutamate racemases family.</text>
</comment>
<gene>
    <name evidence="1" type="primary">murI</name>
    <name type="ordered locus">R01789</name>
    <name type="ORF">SMc00483</name>
</gene>
<keyword id="KW-0133">Cell shape</keyword>
<keyword id="KW-0961">Cell wall biogenesis/degradation</keyword>
<keyword id="KW-0413">Isomerase</keyword>
<keyword id="KW-0573">Peptidoglycan synthesis</keyword>
<keyword id="KW-1185">Reference proteome</keyword>
<sequence>MTKTELKPILVFDSGIGGLTVLREARVLMPERHFIYVADDAGFPYGGWEEGALKERVIALFGRLLAELDPEICIIACNTAFTLVGADLRAAYPQMTFVGTVPAIKPAAERTRSGLVSVLATPGTVKRAYTRDLIQSFASQCHVRLVGSENLARMAEAYIRGDALADEAVLAEIEPCFVEAEGKRTDIVVLACTHYPFMSNVFRRLAPWPVDWLDPAEAIARRARSLVPLPNGFEPLNGEDPAIFTSGRPDFATRRLMQGFGLRVMADAVSADRRERI</sequence>
<accession>Q92PG8</accession>
<evidence type="ECO:0000255" key="1">
    <source>
        <dbReference type="HAMAP-Rule" id="MF_00258"/>
    </source>
</evidence>
<dbReference type="EC" id="5.1.1.3" evidence="1"/>
<dbReference type="EMBL" id="AL591688">
    <property type="protein sequence ID" value="CAC46368.1"/>
    <property type="molecule type" value="Genomic_DNA"/>
</dbReference>
<dbReference type="RefSeq" id="NP_385895.1">
    <property type="nucleotide sequence ID" value="NC_003047.1"/>
</dbReference>
<dbReference type="RefSeq" id="WP_010969468.1">
    <property type="nucleotide sequence ID" value="NC_003047.1"/>
</dbReference>
<dbReference type="SMR" id="Q92PG8"/>
<dbReference type="EnsemblBacteria" id="CAC46368">
    <property type="protein sequence ID" value="CAC46368"/>
    <property type="gene ID" value="SMc00483"/>
</dbReference>
<dbReference type="KEGG" id="sme:SMc00483"/>
<dbReference type="PATRIC" id="fig|266834.11.peg.3230"/>
<dbReference type="eggNOG" id="COG0796">
    <property type="taxonomic scope" value="Bacteria"/>
</dbReference>
<dbReference type="HOGENOM" id="CLU_052344_2_0_5"/>
<dbReference type="OrthoDB" id="9801055at2"/>
<dbReference type="UniPathway" id="UPA00219"/>
<dbReference type="Proteomes" id="UP000001976">
    <property type="component" value="Chromosome"/>
</dbReference>
<dbReference type="GO" id="GO:0008881">
    <property type="term" value="F:glutamate racemase activity"/>
    <property type="evidence" value="ECO:0007669"/>
    <property type="project" value="UniProtKB-UniRule"/>
</dbReference>
<dbReference type="GO" id="GO:0071555">
    <property type="term" value="P:cell wall organization"/>
    <property type="evidence" value="ECO:0007669"/>
    <property type="project" value="UniProtKB-KW"/>
</dbReference>
<dbReference type="GO" id="GO:0009252">
    <property type="term" value="P:peptidoglycan biosynthetic process"/>
    <property type="evidence" value="ECO:0007669"/>
    <property type="project" value="UniProtKB-UniRule"/>
</dbReference>
<dbReference type="GO" id="GO:0008360">
    <property type="term" value="P:regulation of cell shape"/>
    <property type="evidence" value="ECO:0007669"/>
    <property type="project" value="UniProtKB-KW"/>
</dbReference>
<dbReference type="Gene3D" id="3.40.50.1860">
    <property type="match status" value="2"/>
</dbReference>
<dbReference type="HAMAP" id="MF_00258">
    <property type="entry name" value="Glu_racemase"/>
    <property type="match status" value="1"/>
</dbReference>
<dbReference type="InterPro" id="IPR015942">
    <property type="entry name" value="Asp/Glu/hydantoin_racemase"/>
</dbReference>
<dbReference type="InterPro" id="IPR001920">
    <property type="entry name" value="Asp/Glu_race"/>
</dbReference>
<dbReference type="InterPro" id="IPR033134">
    <property type="entry name" value="Asp/Glu_racemase_AS_2"/>
</dbReference>
<dbReference type="InterPro" id="IPR004391">
    <property type="entry name" value="Glu_race"/>
</dbReference>
<dbReference type="NCBIfam" id="TIGR00067">
    <property type="entry name" value="glut_race"/>
    <property type="match status" value="1"/>
</dbReference>
<dbReference type="PANTHER" id="PTHR21198">
    <property type="entry name" value="GLUTAMATE RACEMASE"/>
    <property type="match status" value="1"/>
</dbReference>
<dbReference type="PANTHER" id="PTHR21198:SF2">
    <property type="entry name" value="GLUTAMATE RACEMASE"/>
    <property type="match status" value="1"/>
</dbReference>
<dbReference type="Pfam" id="PF01177">
    <property type="entry name" value="Asp_Glu_race"/>
    <property type="match status" value="1"/>
</dbReference>
<dbReference type="SUPFAM" id="SSF53681">
    <property type="entry name" value="Aspartate/glutamate racemase"/>
    <property type="match status" value="2"/>
</dbReference>
<dbReference type="PROSITE" id="PS00924">
    <property type="entry name" value="ASP_GLU_RACEMASE_2"/>
    <property type="match status" value="1"/>
</dbReference>
<organism>
    <name type="scientific">Rhizobium meliloti (strain 1021)</name>
    <name type="common">Ensifer meliloti</name>
    <name type="synonym">Sinorhizobium meliloti</name>
    <dbReference type="NCBI Taxonomy" id="266834"/>
    <lineage>
        <taxon>Bacteria</taxon>
        <taxon>Pseudomonadati</taxon>
        <taxon>Pseudomonadota</taxon>
        <taxon>Alphaproteobacteria</taxon>
        <taxon>Hyphomicrobiales</taxon>
        <taxon>Rhizobiaceae</taxon>
        <taxon>Sinorhizobium/Ensifer group</taxon>
        <taxon>Sinorhizobium</taxon>
    </lineage>
</organism>
<proteinExistence type="inferred from homology"/>
<protein>
    <recommendedName>
        <fullName evidence="1">Glutamate racemase</fullName>
        <ecNumber evidence="1">5.1.1.3</ecNumber>
    </recommendedName>
</protein>